<evidence type="ECO:0000250" key="1"/>
<evidence type="ECO:0000250" key="2">
    <source>
        <dbReference type="UniProtKB" id="P00157"/>
    </source>
</evidence>
<evidence type="ECO:0000255" key="3">
    <source>
        <dbReference type="PROSITE-ProRule" id="PRU00968"/>
    </source>
</evidence>
<gene>
    <name type="primary">mt-cyb</name>
    <name type="synonym">cob</name>
    <name type="synonym">cytb</name>
    <name type="synonym">mtcyb</name>
</gene>
<geneLocation type="mitochondrion"/>
<sequence>FGSLLGVCLITQILTGLFLAMHYTADIYFAFSSVAHICRDVNYGWLIRNIHTNGASLFFICIYMHIGRGIYHGSFMLKETWNIGVILFLMTMATAFMGYVFP</sequence>
<reference key="1">
    <citation type="journal article" date="1992" name="Nature">
        <title>Ancestry of unisexual salamanders.</title>
        <authorList>
            <person name="Hedges S.B."/>
            <person name="Bogart J.P."/>
            <person name="Maxson L.R."/>
        </authorList>
    </citation>
    <scope>NUCLEOTIDE SEQUENCE [GENOMIC DNA]</scope>
</reference>
<name>CYB_PLEYO</name>
<organism>
    <name type="scientific">Plethodon yonahlossee</name>
    <name type="common">Yonahlossee salamander</name>
    <dbReference type="NCBI Taxonomy" id="8337"/>
    <lineage>
        <taxon>Eukaryota</taxon>
        <taxon>Metazoa</taxon>
        <taxon>Chordata</taxon>
        <taxon>Craniata</taxon>
        <taxon>Vertebrata</taxon>
        <taxon>Euteleostomi</taxon>
        <taxon>Amphibia</taxon>
        <taxon>Batrachia</taxon>
        <taxon>Caudata</taxon>
        <taxon>Salamandroidea</taxon>
        <taxon>Plethodontidae</taxon>
        <taxon>Plethodontinae</taxon>
        <taxon>Plethodon</taxon>
    </lineage>
</organism>
<dbReference type="EMBL" id="Z11614">
    <property type="protein sequence ID" value="CAA77689.1"/>
    <property type="molecule type" value="Genomic_DNA"/>
</dbReference>
<dbReference type="SMR" id="P34862"/>
<dbReference type="GO" id="GO:0005743">
    <property type="term" value="C:mitochondrial inner membrane"/>
    <property type="evidence" value="ECO:0007669"/>
    <property type="project" value="UniProtKB-SubCell"/>
</dbReference>
<dbReference type="GO" id="GO:0046872">
    <property type="term" value="F:metal ion binding"/>
    <property type="evidence" value="ECO:0007669"/>
    <property type="project" value="UniProtKB-KW"/>
</dbReference>
<dbReference type="GO" id="GO:0008121">
    <property type="term" value="F:ubiquinol-cytochrome-c reductase activity"/>
    <property type="evidence" value="ECO:0007669"/>
    <property type="project" value="TreeGrafter"/>
</dbReference>
<dbReference type="GO" id="GO:0006122">
    <property type="term" value="P:mitochondrial electron transport, ubiquinol to cytochrome c"/>
    <property type="evidence" value="ECO:0007669"/>
    <property type="project" value="TreeGrafter"/>
</dbReference>
<dbReference type="Gene3D" id="1.20.810.10">
    <property type="entry name" value="Cytochrome Bc1 Complex, Chain C"/>
    <property type="match status" value="1"/>
</dbReference>
<dbReference type="InterPro" id="IPR005797">
    <property type="entry name" value="Cyt_b/b6_N"/>
</dbReference>
<dbReference type="InterPro" id="IPR027387">
    <property type="entry name" value="Cytb/b6-like_sf"/>
</dbReference>
<dbReference type="InterPro" id="IPR016174">
    <property type="entry name" value="Di-haem_cyt_TM"/>
</dbReference>
<dbReference type="PANTHER" id="PTHR19271">
    <property type="entry name" value="CYTOCHROME B"/>
    <property type="match status" value="1"/>
</dbReference>
<dbReference type="PANTHER" id="PTHR19271:SF16">
    <property type="entry name" value="CYTOCHROME B"/>
    <property type="match status" value="1"/>
</dbReference>
<dbReference type="Pfam" id="PF00033">
    <property type="entry name" value="Cytochrome_B"/>
    <property type="match status" value="1"/>
</dbReference>
<dbReference type="SUPFAM" id="SSF81342">
    <property type="entry name" value="Transmembrane di-heme cytochromes"/>
    <property type="match status" value="1"/>
</dbReference>
<dbReference type="PROSITE" id="PS51002">
    <property type="entry name" value="CYTB_NTER"/>
    <property type="match status" value="1"/>
</dbReference>
<proteinExistence type="inferred from homology"/>
<feature type="chain" id="PRO_0000061419" description="Cytochrome b">
    <location>
        <begin position="1" status="less than"/>
        <end position="102" status="greater than"/>
    </location>
</feature>
<feature type="transmembrane region" description="Helical" evidence="2">
    <location>
        <begin position="1"/>
        <end position="21"/>
    </location>
</feature>
<feature type="transmembrane region" description="Helical" evidence="2">
    <location>
        <begin position="45"/>
        <end position="66"/>
    </location>
</feature>
<feature type="transmembrane region" description="Helical" evidence="3">
    <location>
        <begin position="81"/>
        <end position="101"/>
    </location>
</feature>
<feature type="binding site" description="axial binding residue" evidence="2">
    <location>
        <position position="51"/>
    </location>
    <ligand>
        <name>heme b</name>
        <dbReference type="ChEBI" id="CHEBI:60344"/>
        <label>b562</label>
    </ligand>
    <ligandPart>
        <name>Fe</name>
        <dbReference type="ChEBI" id="CHEBI:18248"/>
    </ligandPart>
</feature>
<feature type="binding site" description="axial binding residue" evidence="2">
    <location>
        <position position="65"/>
    </location>
    <ligand>
        <name>heme b</name>
        <dbReference type="ChEBI" id="CHEBI:60344"/>
        <label>b566</label>
    </ligand>
    <ligandPart>
        <name>Fe</name>
        <dbReference type="ChEBI" id="CHEBI:18248"/>
    </ligandPart>
</feature>
<feature type="non-terminal residue">
    <location>
        <position position="1"/>
    </location>
</feature>
<feature type="non-terminal residue">
    <location>
        <position position="102"/>
    </location>
</feature>
<keyword id="KW-0249">Electron transport</keyword>
<keyword id="KW-0349">Heme</keyword>
<keyword id="KW-0408">Iron</keyword>
<keyword id="KW-0472">Membrane</keyword>
<keyword id="KW-0479">Metal-binding</keyword>
<keyword id="KW-0496">Mitochondrion</keyword>
<keyword id="KW-0999">Mitochondrion inner membrane</keyword>
<keyword id="KW-0679">Respiratory chain</keyword>
<keyword id="KW-0812">Transmembrane</keyword>
<keyword id="KW-1133">Transmembrane helix</keyword>
<keyword id="KW-0813">Transport</keyword>
<keyword id="KW-0830">Ubiquinone</keyword>
<comment type="function">
    <text evidence="2">Component of the ubiquinol-cytochrome c reductase complex (complex III or cytochrome b-c1 complex) that is part of the mitochondrial respiratory chain. The b-c1 complex mediates electron transfer from ubiquinol to cytochrome c. Contributes to the generation of a proton gradient across the mitochondrial membrane that is then used for ATP synthesis.</text>
</comment>
<comment type="cofactor">
    <cofactor evidence="2">
        <name>heme b</name>
        <dbReference type="ChEBI" id="CHEBI:60344"/>
    </cofactor>
    <text evidence="2">Binds 2 heme b groups non-covalently.</text>
</comment>
<comment type="subunit">
    <text evidence="2">The cytochrome bc1 complex contains 3 respiratory subunits (MT-CYB, CYC1 and UQCRFS1), 2 core proteins (UQCRC1 and UQCRC2) and probably 6 low-molecular weight proteins.</text>
</comment>
<comment type="subcellular location">
    <subcellularLocation>
        <location evidence="2">Mitochondrion inner membrane</location>
        <topology evidence="2">Multi-pass membrane protein</topology>
    </subcellularLocation>
</comment>
<comment type="miscellaneous">
    <text evidence="1">Heme 1 (or BL or b562) is low-potential and absorbs at about 562 nm, and heme 2 (or BH or b566) is high-potential and absorbs at about 566 nm.</text>
</comment>
<comment type="similarity">
    <text evidence="3">Belongs to the cytochrome b family.</text>
</comment>
<comment type="caution">
    <text evidence="2">The full-length protein contains only eight transmembrane helices, not nine as predicted by bioinformatics tools.</text>
</comment>
<accession>P34862</accession>
<protein>
    <recommendedName>
        <fullName>Cytochrome b</fullName>
    </recommendedName>
    <alternativeName>
        <fullName>Complex III subunit 3</fullName>
    </alternativeName>
    <alternativeName>
        <fullName>Complex III subunit III</fullName>
    </alternativeName>
    <alternativeName>
        <fullName>Cytochrome b-c1 complex subunit 3</fullName>
    </alternativeName>
    <alternativeName>
        <fullName>Ubiquinol-cytochrome-c reductase complex cytochrome b subunit</fullName>
    </alternativeName>
</protein>